<name>THA11_MOUSE</name>
<proteinExistence type="evidence at protein level"/>
<reference key="1">
    <citation type="submission" date="2000-04" db="EMBL/GenBank/DDBJ databases">
        <title>Isolation of full-length cDNA clones from mouse brain cDNA library made by oligo-capping method.</title>
        <authorList>
            <person name="Osada N."/>
            <person name="Kusuda J."/>
            <person name="Tanuma R."/>
            <person name="Ito A."/>
            <person name="Hirata M."/>
            <person name="Sugano S."/>
            <person name="Hashimoto K."/>
        </authorList>
    </citation>
    <scope>NUCLEOTIDE SEQUENCE [LARGE SCALE MRNA]</scope>
    <source>
        <strain>C57BL/6J</strain>
        <tissue>Brain</tissue>
    </source>
</reference>
<reference key="2">
    <citation type="journal article" date="2005" name="Science">
        <title>The transcriptional landscape of the mammalian genome.</title>
        <authorList>
            <person name="Carninci P."/>
            <person name="Kasukawa T."/>
            <person name="Katayama S."/>
            <person name="Gough J."/>
            <person name="Frith M.C."/>
            <person name="Maeda N."/>
            <person name="Oyama R."/>
            <person name="Ravasi T."/>
            <person name="Lenhard B."/>
            <person name="Wells C."/>
            <person name="Kodzius R."/>
            <person name="Shimokawa K."/>
            <person name="Bajic V.B."/>
            <person name="Brenner S.E."/>
            <person name="Batalov S."/>
            <person name="Forrest A.R."/>
            <person name="Zavolan M."/>
            <person name="Davis M.J."/>
            <person name="Wilming L.G."/>
            <person name="Aidinis V."/>
            <person name="Allen J.E."/>
            <person name="Ambesi-Impiombato A."/>
            <person name="Apweiler R."/>
            <person name="Aturaliya R.N."/>
            <person name="Bailey T.L."/>
            <person name="Bansal M."/>
            <person name="Baxter L."/>
            <person name="Beisel K.W."/>
            <person name="Bersano T."/>
            <person name="Bono H."/>
            <person name="Chalk A.M."/>
            <person name="Chiu K.P."/>
            <person name="Choudhary V."/>
            <person name="Christoffels A."/>
            <person name="Clutterbuck D.R."/>
            <person name="Crowe M.L."/>
            <person name="Dalla E."/>
            <person name="Dalrymple B.P."/>
            <person name="de Bono B."/>
            <person name="Della Gatta G."/>
            <person name="di Bernardo D."/>
            <person name="Down T."/>
            <person name="Engstrom P."/>
            <person name="Fagiolini M."/>
            <person name="Faulkner G."/>
            <person name="Fletcher C.F."/>
            <person name="Fukushima T."/>
            <person name="Furuno M."/>
            <person name="Futaki S."/>
            <person name="Gariboldi M."/>
            <person name="Georgii-Hemming P."/>
            <person name="Gingeras T.R."/>
            <person name="Gojobori T."/>
            <person name="Green R.E."/>
            <person name="Gustincich S."/>
            <person name="Harbers M."/>
            <person name="Hayashi Y."/>
            <person name="Hensch T.K."/>
            <person name="Hirokawa N."/>
            <person name="Hill D."/>
            <person name="Huminiecki L."/>
            <person name="Iacono M."/>
            <person name="Ikeo K."/>
            <person name="Iwama A."/>
            <person name="Ishikawa T."/>
            <person name="Jakt M."/>
            <person name="Kanapin A."/>
            <person name="Katoh M."/>
            <person name="Kawasawa Y."/>
            <person name="Kelso J."/>
            <person name="Kitamura H."/>
            <person name="Kitano H."/>
            <person name="Kollias G."/>
            <person name="Krishnan S.P."/>
            <person name="Kruger A."/>
            <person name="Kummerfeld S.K."/>
            <person name="Kurochkin I.V."/>
            <person name="Lareau L.F."/>
            <person name="Lazarevic D."/>
            <person name="Lipovich L."/>
            <person name="Liu J."/>
            <person name="Liuni S."/>
            <person name="McWilliam S."/>
            <person name="Madan Babu M."/>
            <person name="Madera M."/>
            <person name="Marchionni L."/>
            <person name="Matsuda H."/>
            <person name="Matsuzawa S."/>
            <person name="Miki H."/>
            <person name="Mignone F."/>
            <person name="Miyake S."/>
            <person name="Morris K."/>
            <person name="Mottagui-Tabar S."/>
            <person name="Mulder N."/>
            <person name="Nakano N."/>
            <person name="Nakauchi H."/>
            <person name="Ng P."/>
            <person name="Nilsson R."/>
            <person name="Nishiguchi S."/>
            <person name="Nishikawa S."/>
            <person name="Nori F."/>
            <person name="Ohara O."/>
            <person name="Okazaki Y."/>
            <person name="Orlando V."/>
            <person name="Pang K.C."/>
            <person name="Pavan W.J."/>
            <person name="Pavesi G."/>
            <person name="Pesole G."/>
            <person name="Petrovsky N."/>
            <person name="Piazza S."/>
            <person name="Reed J."/>
            <person name="Reid J.F."/>
            <person name="Ring B.Z."/>
            <person name="Ringwald M."/>
            <person name="Rost B."/>
            <person name="Ruan Y."/>
            <person name="Salzberg S.L."/>
            <person name="Sandelin A."/>
            <person name="Schneider C."/>
            <person name="Schoenbach C."/>
            <person name="Sekiguchi K."/>
            <person name="Semple C.A."/>
            <person name="Seno S."/>
            <person name="Sessa L."/>
            <person name="Sheng Y."/>
            <person name="Shibata Y."/>
            <person name="Shimada H."/>
            <person name="Shimada K."/>
            <person name="Silva D."/>
            <person name="Sinclair B."/>
            <person name="Sperling S."/>
            <person name="Stupka E."/>
            <person name="Sugiura K."/>
            <person name="Sultana R."/>
            <person name="Takenaka Y."/>
            <person name="Taki K."/>
            <person name="Tammoja K."/>
            <person name="Tan S.L."/>
            <person name="Tang S."/>
            <person name="Taylor M.S."/>
            <person name="Tegner J."/>
            <person name="Teichmann S.A."/>
            <person name="Ueda H.R."/>
            <person name="van Nimwegen E."/>
            <person name="Verardo R."/>
            <person name="Wei C.L."/>
            <person name="Yagi K."/>
            <person name="Yamanishi H."/>
            <person name="Zabarovsky E."/>
            <person name="Zhu S."/>
            <person name="Zimmer A."/>
            <person name="Hide W."/>
            <person name="Bult C."/>
            <person name="Grimmond S.M."/>
            <person name="Teasdale R.D."/>
            <person name="Liu E.T."/>
            <person name="Brusic V."/>
            <person name="Quackenbush J."/>
            <person name="Wahlestedt C."/>
            <person name="Mattick J.S."/>
            <person name="Hume D.A."/>
            <person name="Kai C."/>
            <person name="Sasaki D."/>
            <person name="Tomaru Y."/>
            <person name="Fukuda S."/>
            <person name="Kanamori-Katayama M."/>
            <person name="Suzuki M."/>
            <person name="Aoki J."/>
            <person name="Arakawa T."/>
            <person name="Iida J."/>
            <person name="Imamura K."/>
            <person name="Itoh M."/>
            <person name="Kato T."/>
            <person name="Kawaji H."/>
            <person name="Kawagashira N."/>
            <person name="Kawashima T."/>
            <person name="Kojima M."/>
            <person name="Kondo S."/>
            <person name="Konno H."/>
            <person name="Nakano K."/>
            <person name="Ninomiya N."/>
            <person name="Nishio T."/>
            <person name="Okada M."/>
            <person name="Plessy C."/>
            <person name="Shibata K."/>
            <person name="Shiraki T."/>
            <person name="Suzuki S."/>
            <person name="Tagami M."/>
            <person name="Waki K."/>
            <person name="Watahiki A."/>
            <person name="Okamura-Oho Y."/>
            <person name="Suzuki H."/>
            <person name="Kawai J."/>
            <person name="Hayashizaki Y."/>
        </authorList>
    </citation>
    <scope>NUCLEOTIDE SEQUENCE [LARGE SCALE MRNA]</scope>
    <source>
        <strain>NOD</strain>
        <tissue>Lung</tissue>
    </source>
</reference>
<reference key="3">
    <citation type="submission" date="2005-07" db="EMBL/GenBank/DDBJ databases">
        <authorList>
            <person name="Mural R.J."/>
            <person name="Adams M.D."/>
            <person name="Myers E.W."/>
            <person name="Smith H.O."/>
            <person name="Venter J.C."/>
        </authorList>
    </citation>
    <scope>NUCLEOTIDE SEQUENCE [LARGE SCALE GENOMIC DNA]</scope>
</reference>
<reference key="4">
    <citation type="journal article" date="2004" name="Genome Res.">
        <title>The status, quality, and expansion of the NIH full-length cDNA project: the Mammalian Gene Collection (MGC).</title>
        <authorList>
            <consortium name="The MGC Project Team"/>
        </authorList>
    </citation>
    <scope>NUCLEOTIDE SEQUENCE [LARGE SCALE MRNA]</scope>
    <source>
        <strain>FVB/N</strain>
        <tissue>Brain</tissue>
        <tissue>Mammary tumor</tissue>
    </source>
</reference>
<reference key="5">
    <citation type="journal article" date="2008" name="Cell">
        <title>Ronin is essential for embryogenesis and the pluripotency of mouse embryonic stem cells.</title>
        <authorList>
            <person name="Dejosez M."/>
            <person name="Krumenacker J.S."/>
            <person name="Zitur L.J."/>
            <person name="Passeri M."/>
            <person name="Chu L.-F."/>
            <person name="Songyang Z."/>
            <person name="Thomson J.A."/>
            <person name="Zwaka T.P."/>
        </authorList>
    </citation>
    <scope>FUNCTION</scope>
    <scope>SUBCELLULAR LOCATION</scope>
    <scope>DNA-BINDING</scope>
    <scope>TISSUE SPECIFICITY</scope>
    <scope>DEVELOPMENTAL STAGE</scope>
    <scope>DISRUPTION PHENOTYPE</scope>
    <scope>INTERACTION WITH HCFC1</scope>
</reference>
<reference key="6">
    <citation type="journal article" date="2008" name="Cell">
        <authorList>
            <person name="Dejosez M."/>
            <person name="Krumenacker J.S."/>
            <person name="Zitur L.J."/>
            <person name="Passeri M."/>
            <person name="Chu L.-F."/>
            <person name="Songyang Z."/>
            <person name="Thomson J.A."/>
            <person name="Zwaka T.P."/>
        </authorList>
    </citation>
    <scope>ERRATUM OF PUBMED:18585351</scope>
</reference>
<reference key="7">
    <citation type="journal article" date="2016" name="Cell Rep.">
        <title>RONIN Is an Essential Transcriptional Regulator of Genes Required for Mitochondrial Function in the Developing Retina.</title>
        <authorList>
            <person name="Poche R.A."/>
            <person name="Zhang M."/>
            <person name="Rueda E.M."/>
            <person name="Tong X."/>
            <person name="McElwee M.L."/>
            <person name="Wong L."/>
            <person name="Hsu C.W."/>
            <person name="Dejosez M."/>
            <person name="Burns A.R."/>
            <person name="Fox D.A."/>
            <person name="Martin J.F."/>
            <person name="Zwaka T.P."/>
            <person name="Dickinson M.E."/>
        </authorList>
    </citation>
    <scope>FUNCTION</scope>
    <scope>DNA-BINDING</scope>
    <scope>DEVELOPMENTAL STAGE</scope>
</reference>
<reference key="8">
    <citation type="journal article" date="2021" name="EMBO Rep.">
        <title>Ronin governs the metabolic capacity of the embryonic lineage for post-implantation development.</title>
        <authorList>
            <person name="Salewskij K."/>
            <person name="Gross-Thebing T."/>
            <person name="Ing-Simmons E."/>
            <person name="Duethorn B."/>
            <person name="Rieger B."/>
            <person name="Fan R."/>
            <person name="Chen R."/>
            <person name="Govindasamy N."/>
            <person name="Brinkmann H."/>
            <person name="Kremer L."/>
            <person name="Kuempel-Rink N."/>
            <person name="Mildner K."/>
            <person name="Zeuschner D."/>
            <person name="Stehling M."/>
            <person name="Dejosez M."/>
            <person name="Zwaka T.P."/>
            <person name="Schoeler H.R."/>
            <person name="Busch K.B."/>
            <person name="Vaquerizas J.M."/>
            <person name="Bedzhov I."/>
        </authorList>
    </citation>
    <scope>FUNCTION</scope>
    <scope>DEVELOPMENTAL STAGE</scope>
    <scope>SUBCELLULAR LOCATION</scope>
</reference>
<gene>
    <name type="primary">Thap11</name>
    <name type="ORF">MNCb-2032</name>
</gene>
<comment type="function">
    <text evidence="2 7">Transcriptional repressor that plays a central role for embryogenesis and the pluripotency of embryonic stem (ES) cells. Sequence-specific DNA-binding factor that represses gene expression in pluripotent ES cells by directly binding to key genetic loci and recruiting epigenetic modifiers (PubMed:18585351). Required for normal brain development and neural precursor differentiation (By similarity).</text>
</comment>
<comment type="function">
    <text evidence="2 3 7 8 9">Transcription factor, which has both transcriptional activation and repression activities (PubMed:18585351, PubMed:26876175, PubMed:34515391). Also modulates chromatin accessibility (By similarity). In complex with HCFC1 and ZNF143, regulates the expression of several genes, including AP2S1, ESCO2, OPHN1, RBL1, UBXN8 and ZNF32 (By similarity). May regulate the expression of genes that encode both cytoplasmic and mitochondrial ribosomal proteins (PubMed:34515391). Required for normal mitochondrial development and function. Regulates mitochondrial gene expression, including that of components of the electron transport chain (PubMed:26876175, PubMed:34515391). Involved in the maintainance of pluripotency in early embryonic cells, possibly through its action on mitochondrial maturation which is required to meet high energy demands of these cells (PubMed:18585351, PubMed:34515391). Required for early development of retina, preventing premature exit of retinal progenitor cells from the cell cycle. This effect may also be mediated by its action on mitochondria (PubMed:26876175). Through the regulation of MMACHC gene expression, controls cobalamin metabolism (By similarity). Required for normal brain development and neural precursor differentiation (By similarity). Involved in cell growth (By similarity).</text>
</comment>
<comment type="subunit">
    <text evidence="3 7">Forms homodimers (By similarity). Interacts via HBM with HCFC1 (PubMed:18585351). Forms a complex with HCFC1 and ZNF143 (By similarity).</text>
</comment>
<comment type="subcellular location">
    <subcellularLocation>
        <location evidence="7 9">Nucleus</location>
    </subcellularLocation>
    <subcellularLocation>
        <location evidence="7">Cytoplasm</location>
    </subcellularLocation>
    <text evidence="3 7">In oocytes, detected in the ooplasm, without evidence of its presence in the nucleus. Found in the nucleus of undifferentiated embryonic stem cells (PubMed:18585351). Evenly distributed between nucleus and cytoplasm in skin fibroblasts (By similarity).</text>
</comment>
<comment type="tissue specificity">
    <text evidence="7">Mainly expressed in embryonic pluripotent cells (PubMed:18585351). In adult tissues, expressed in oocytes and in certain regions of the brain,including hippocampus, olfactory bulb and Purkinje cells (PubMed:18585351).</text>
</comment>
<comment type="developmental stage">
    <text evidence="7 8 9">Expression first detected at the 2-cell stage (1.5 dpc). Expression increases during the 8-cell (2.5 dpc) and compact morula (3.0 dpc) stages (PubMed:18585351). Expressed in the blastocyst (at protein level) (PubMed:18585351). Highly expressed at 5.5 dpc in the post-implantation epiblast (PubMed:34515391). At 14.5 dpc, expressed in the retina. At 16.5 dpc, expressed in retinal progenitor cells of the outer neuroblastic layer and inner neuroblastic layer with lower levels within the ganglion cell layer. At postnatal day 20 (P20), ubiquitously expressed in the retina (at protein level). Expression levels in the retina are lower postnatally, with a 2-fold decrease between 14.5 dpc and P50 (PubMed:26876175).</text>
</comment>
<comment type="disruption phenotype">
    <text evidence="7">Embryonic lethal; embryos die around the time of implantation.</text>
</comment>
<comment type="miscellaneous">
    <text>Was named 'Ronin' (a masterless Japanese samurai) by PubMed:18585351 because of its lack of apparent relationship to known 'master' regulator of pluripotency.</text>
</comment>
<comment type="similarity">
    <text evidence="11">Belongs to the THAP11 family.</text>
</comment>
<comment type="sequence caution" evidence="11">
    <conflict type="erroneous initiation">
        <sequence resource="EMBL-CDS" id="AAH03949"/>
    </conflict>
    <text>Extended N-terminus.</text>
</comment>
<keyword id="KW-0010">Activator</keyword>
<keyword id="KW-0175">Coiled coil</keyword>
<keyword id="KW-0963">Cytoplasm</keyword>
<keyword id="KW-0238">DNA-binding</keyword>
<keyword id="KW-0479">Metal-binding</keyword>
<keyword id="KW-0539">Nucleus</keyword>
<keyword id="KW-1185">Reference proteome</keyword>
<keyword id="KW-0678">Repressor</keyword>
<keyword id="KW-0804">Transcription</keyword>
<keyword id="KW-0805">Transcription regulation</keyword>
<keyword id="KW-0862">Zinc</keyword>
<keyword id="KW-0863">Zinc-finger</keyword>
<organism>
    <name type="scientific">Mus musculus</name>
    <name type="common">Mouse</name>
    <dbReference type="NCBI Taxonomy" id="10090"/>
    <lineage>
        <taxon>Eukaryota</taxon>
        <taxon>Metazoa</taxon>
        <taxon>Chordata</taxon>
        <taxon>Craniata</taxon>
        <taxon>Vertebrata</taxon>
        <taxon>Euteleostomi</taxon>
        <taxon>Mammalia</taxon>
        <taxon>Eutheria</taxon>
        <taxon>Euarchontoglires</taxon>
        <taxon>Glires</taxon>
        <taxon>Rodentia</taxon>
        <taxon>Myomorpha</taxon>
        <taxon>Muroidea</taxon>
        <taxon>Muridae</taxon>
        <taxon>Murinae</taxon>
        <taxon>Mus</taxon>
        <taxon>Mus</taxon>
    </lineage>
</organism>
<protein>
    <recommendedName>
        <fullName>THAP domain-containing protein 11</fullName>
    </recommendedName>
    <alternativeName>
        <fullName evidence="10">Ronin</fullName>
    </alternativeName>
</protein>
<evidence type="ECO:0000250" key="1"/>
<evidence type="ECO:0000250" key="2">
    <source>
        <dbReference type="UniProtKB" id="Q6TGZ4"/>
    </source>
</evidence>
<evidence type="ECO:0000250" key="3">
    <source>
        <dbReference type="UniProtKB" id="Q96EK4"/>
    </source>
</evidence>
<evidence type="ECO:0000255" key="4"/>
<evidence type="ECO:0000255" key="5">
    <source>
        <dbReference type="PROSITE-ProRule" id="PRU00309"/>
    </source>
</evidence>
<evidence type="ECO:0000256" key="6">
    <source>
        <dbReference type="SAM" id="MobiDB-lite"/>
    </source>
</evidence>
<evidence type="ECO:0000269" key="7">
    <source>
    </source>
</evidence>
<evidence type="ECO:0000269" key="8">
    <source>
    </source>
</evidence>
<evidence type="ECO:0000269" key="9">
    <source>
    </source>
</evidence>
<evidence type="ECO:0000303" key="10">
    <source>
    </source>
</evidence>
<evidence type="ECO:0000305" key="11"/>
<dbReference type="EMBL" id="AB041579">
    <property type="protein sequence ID" value="BAA95063.1"/>
    <property type="molecule type" value="mRNA"/>
</dbReference>
<dbReference type="EMBL" id="AK165981">
    <property type="protein sequence ID" value="BAE38498.1"/>
    <property type="molecule type" value="mRNA"/>
</dbReference>
<dbReference type="EMBL" id="AK170457">
    <property type="protein sequence ID" value="BAE41810.1"/>
    <property type="molecule type" value="mRNA"/>
</dbReference>
<dbReference type="EMBL" id="CH466525">
    <property type="protein sequence ID" value="EDL11318.1"/>
    <property type="molecule type" value="Genomic_DNA"/>
</dbReference>
<dbReference type="EMBL" id="BC003949">
    <property type="protein sequence ID" value="AAH03949.1"/>
    <property type="status" value="ALT_INIT"/>
    <property type="molecule type" value="mRNA"/>
</dbReference>
<dbReference type="EMBL" id="BC138966">
    <property type="protein sequence ID" value="AAI38967.1"/>
    <property type="molecule type" value="mRNA"/>
</dbReference>
<dbReference type="EMBL" id="BC138987">
    <property type="protein sequence ID" value="AAI38988.1"/>
    <property type="molecule type" value="mRNA"/>
</dbReference>
<dbReference type="CCDS" id="CCDS22616.1"/>
<dbReference type="RefSeq" id="NP_067488.1">
    <property type="nucleotide sequence ID" value="NM_021513.2"/>
</dbReference>
<dbReference type="BMRB" id="Q9JJD0"/>
<dbReference type="SMR" id="Q9JJD0"/>
<dbReference type="BioGRID" id="208487">
    <property type="interactions" value="3"/>
</dbReference>
<dbReference type="ELM" id="Q9JJD0"/>
<dbReference type="FunCoup" id="Q9JJD0">
    <property type="interactions" value="2892"/>
</dbReference>
<dbReference type="STRING" id="10090.ENSMUSP00000048994"/>
<dbReference type="iPTMnet" id="Q9JJD0"/>
<dbReference type="PhosphoSitePlus" id="Q9JJD0"/>
<dbReference type="PaxDb" id="10090-ENSMUSP00000048994"/>
<dbReference type="PeptideAtlas" id="Q9JJD0"/>
<dbReference type="ProteomicsDB" id="263172"/>
<dbReference type="Pumba" id="Q9JJD0"/>
<dbReference type="Antibodypedia" id="29649">
    <property type="antibodies" value="283 antibodies from 34 providers"/>
</dbReference>
<dbReference type="DNASU" id="59016"/>
<dbReference type="Ensembl" id="ENSMUST00000040445.9">
    <property type="protein sequence ID" value="ENSMUSP00000048994.8"/>
    <property type="gene ID" value="ENSMUSG00000036442.9"/>
</dbReference>
<dbReference type="GeneID" id="59016"/>
<dbReference type="KEGG" id="mmu:59016"/>
<dbReference type="UCSC" id="uc009nei.2">
    <property type="organism name" value="mouse"/>
</dbReference>
<dbReference type="AGR" id="MGI:1930964"/>
<dbReference type="CTD" id="57215"/>
<dbReference type="MGI" id="MGI:1930964">
    <property type="gene designation" value="Thap11"/>
</dbReference>
<dbReference type="VEuPathDB" id="HostDB:ENSMUSG00000036442"/>
<dbReference type="eggNOG" id="ENOG502QQ1Z">
    <property type="taxonomic scope" value="Eukaryota"/>
</dbReference>
<dbReference type="GeneTree" id="ENSGT00390000006585"/>
<dbReference type="HOGENOM" id="CLU_090879_1_0_1"/>
<dbReference type="InParanoid" id="Q9JJD0"/>
<dbReference type="OMA" id="GHRVCSI"/>
<dbReference type="OrthoDB" id="8948150at2759"/>
<dbReference type="PhylomeDB" id="Q9JJD0"/>
<dbReference type="TreeFam" id="TF331359"/>
<dbReference type="BioGRID-ORCS" id="59016">
    <property type="hits" value="33 hits in 81 CRISPR screens"/>
</dbReference>
<dbReference type="ChiTaRS" id="Thap11">
    <property type="organism name" value="mouse"/>
</dbReference>
<dbReference type="PRO" id="PR:Q9JJD0"/>
<dbReference type="Proteomes" id="UP000000589">
    <property type="component" value="Chromosome 8"/>
</dbReference>
<dbReference type="RNAct" id="Q9JJD0">
    <property type="molecule type" value="protein"/>
</dbReference>
<dbReference type="Bgee" id="ENSMUSG00000036442">
    <property type="expression patterns" value="Expressed in dorsal pancreas and 256 other cell types or tissues"/>
</dbReference>
<dbReference type="GO" id="GO:0005829">
    <property type="term" value="C:cytosol"/>
    <property type="evidence" value="ECO:0007669"/>
    <property type="project" value="Ensembl"/>
</dbReference>
<dbReference type="GO" id="GO:0005654">
    <property type="term" value="C:nucleoplasm"/>
    <property type="evidence" value="ECO:0007669"/>
    <property type="project" value="Ensembl"/>
</dbReference>
<dbReference type="GO" id="GO:0090575">
    <property type="term" value="C:RNA polymerase II transcription regulator complex"/>
    <property type="evidence" value="ECO:0000305"/>
    <property type="project" value="MGI"/>
</dbReference>
<dbReference type="GO" id="GO:0003677">
    <property type="term" value="F:DNA binding"/>
    <property type="evidence" value="ECO:0000250"/>
    <property type="project" value="UniProtKB"/>
</dbReference>
<dbReference type="GO" id="GO:0001228">
    <property type="term" value="F:DNA-binding transcription activator activity, RNA polymerase II-specific"/>
    <property type="evidence" value="ECO:0000315"/>
    <property type="project" value="MGI"/>
</dbReference>
<dbReference type="GO" id="GO:0001227">
    <property type="term" value="F:DNA-binding transcription repressor activity, RNA polymerase II-specific"/>
    <property type="evidence" value="ECO:0007669"/>
    <property type="project" value="Ensembl"/>
</dbReference>
<dbReference type="GO" id="GO:0000978">
    <property type="term" value="F:RNA polymerase II cis-regulatory region sequence-specific DNA binding"/>
    <property type="evidence" value="ECO:0007669"/>
    <property type="project" value="Ensembl"/>
</dbReference>
<dbReference type="GO" id="GO:0000977">
    <property type="term" value="F:RNA polymerase II transcription regulatory region sequence-specific DNA binding"/>
    <property type="evidence" value="ECO:0000315"/>
    <property type="project" value="MGI"/>
</dbReference>
<dbReference type="GO" id="GO:0008270">
    <property type="term" value="F:zinc ion binding"/>
    <property type="evidence" value="ECO:0000250"/>
    <property type="project" value="UniProtKB"/>
</dbReference>
<dbReference type="GO" id="GO:0008283">
    <property type="term" value="P:cell population proliferation"/>
    <property type="evidence" value="ECO:0000315"/>
    <property type="project" value="MGI"/>
</dbReference>
<dbReference type="GO" id="GO:0022900">
    <property type="term" value="P:electron transport chain"/>
    <property type="evidence" value="ECO:0000315"/>
    <property type="project" value="MGI"/>
</dbReference>
<dbReference type="GO" id="GO:0043524">
    <property type="term" value="P:negative regulation of neuron apoptotic process"/>
    <property type="evidence" value="ECO:0000315"/>
    <property type="project" value="MGI"/>
</dbReference>
<dbReference type="GO" id="GO:0000122">
    <property type="term" value="P:negative regulation of transcription by RNA polymerase II"/>
    <property type="evidence" value="ECO:0000315"/>
    <property type="project" value="MGI"/>
</dbReference>
<dbReference type="GO" id="GO:0030182">
    <property type="term" value="P:neuron differentiation"/>
    <property type="evidence" value="ECO:0000315"/>
    <property type="project" value="MGI"/>
</dbReference>
<dbReference type="GO" id="GO:1903108">
    <property type="term" value="P:regulation of mitochondrial transcription"/>
    <property type="evidence" value="ECO:0000315"/>
    <property type="project" value="MGI"/>
</dbReference>
<dbReference type="CDD" id="cd22291">
    <property type="entry name" value="cc_THAP11_C"/>
    <property type="match status" value="1"/>
</dbReference>
<dbReference type="InterPro" id="IPR006612">
    <property type="entry name" value="THAP_Znf"/>
</dbReference>
<dbReference type="PANTHER" id="PTHR22794">
    <property type="entry name" value="THAP DOMAIN PROTEIN 11"/>
    <property type="match status" value="1"/>
</dbReference>
<dbReference type="PANTHER" id="PTHR22794:SF2">
    <property type="entry name" value="THAP DOMAIN-CONTAINING PROTEIN 11"/>
    <property type="match status" value="1"/>
</dbReference>
<dbReference type="Pfam" id="PF05485">
    <property type="entry name" value="THAP"/>
    <property type="match status" value="1"/>
</dbReference>
<dbReference type="SMART" id="SM00692">
    <property type="entry name" value="DM3"/>
    <property type="match status" value="1"/>
</dbReference>
<dbReference type="SMART" id="SM00980">
    <property type="entry name" value="THAP"/>
    <property type="match status" value="1"/>
</dbReference>
<dbReference type="SUPFAM" id="SSF57716">
    <property type="entry name" value="Glucocorticoid receptor-like (DNA-binding domain)"/>
    <property type="match status" value="1"/>
</dbReference>
<dbReference type="PROSITE" id="PS50950">
    <property type="entry name" value="ZF_THAP"/>
    <property type="match status" value="1"/>
</dbReference>
<sequence>MPGFTCCVPGCYNNSHRDKALHFYTFPKDAELRRLWLKNVSRAGVSGCFSTFQPTTGHRLCSVHFQGGRKTYTVRVPTIFPLRGVNERKVARRPAGAAAARRRQQQQQQQQQQQQQQQLQQQQPSPSSSTAQTTQLQPNLVSASAAVLLTLQAAVDSNQAPGSVVPVSTTPSGDDVKPIDLTVQVEFAAAEGAAAAAAASELEAATAGLEAAECTLGPQLVVVGEEGFPDTGSDHSYSLSSGTTEEELLRKLNEQRDILALMEVKMKEMKGSIRHLRLTEAKLREELREKDRLLAMAVIRKKHGM</sequence>
<accession>Q9JJD0</accession>
<accession>Q3TCZ5</accession>
<accession>Q99KZ0</accession>
<feature type="chain" id="PRO_0000068654" description="THAP domain-containing protein 11">
    <location>
        <begin position="1"/>
        <end position="305"/>
    </location>
</feature>
<feature type="zinc finger region" description="THAP-type" evidence="5">
    <location>
        <begin position="1"/>
        <end position="80"/>
    </location>
</feature>
<feature type="region of interest" description="Disordered" evidence="6">
    <location>
        <begin position="85"/>
        <end position="135"/>
    </location>
</feature>
<feature type="coiled-coil region" evidence="4">
    <location>
        <begin position="246"/>
        <end position="296"/>
    </location>
</feature>
<feature type="short sequence motif" description="HCFC1-binding motif (HBM)" evidence="1">
    <location>
        <begin position="234"/>
        <end position="237"/>
    </location>
</feature>
<feature type="compositionally biased region" description="Low complexity" evidence="6">
    <location>
        <begin position="105"/>
        <end position="135"/>
    </location>
</feature>